<dbReference type="EC" id="3.1.1.-"/>
<dbReference type="EMBL" id="BC060482">
    <property type="protein sequence ID" value="AAH60482.1"/>
    <property type="molecule type" value="mRNA"/>
</dbReference>
<dbReference type="RefSeq" id="NP_001083362.1">
    <property type="nucleotide sequence ID" value="NM_001089893.1"/>
</dbReference>
<dbReference type="SMR" id="Q6PA23"/>
<dbReference type="ESTHER" id="xenla-LIPHA">
    <property type="family name" value="Phospholipase"/>
</dbReference>
<dbReference type="GlyCosmos" id="Q6PA23">
    <property type="glycosylation" value="5 sites, No reported glycans"/>
</dbReference>
<dbReference type="DNASU" id="398885"/>
<dbReference type="GeneID" id="398885"/>
<dbReference type="KEGG" id="xla:398885"/>
<dbReference type="AGR" id="Xenbase:XB-GENE-6079134"/>
<dbReference type="CTD" id="398885"/>
<dbReference type="Xenbase" id="XB-GENE-6079134">
    <property type="gene designation" value="liph.L"/>
</dbReference>
<dbReference type="OrthoDB" id="199913at2759"/>
<dbReference type="Proteomes" id="UP000186698">
    <property type="component" value="Chromosome 2L"/>
</dbReference>
<dbReference type="Bgee" id="398885">
    <property type="expression patterns" value="Expressed in intestine and 10 other cell types or tissues"/>
</dbReference>
<dbReference type="GO" id="GO:0005615">
    <property type="term" value="C:extracellular space"/>
    <property type="evidence" value="ECO:0000318"/>
    <property type="project" value="GO_Central"/>
</dbReference>
<dbReference type="GO" id="GO:0005886">
    <property type="term" value="C:plasma membrane"/>
    <property type="evidence" value="ECO:0007669"/>
    <property type="project" value="UniProtKB-SubCell"/>
</dbReference>
<dbReference type="GO" id="GO:0052689">
    <property type="term" value="F:carboxylic ester hydrolase activity"/>
    <property type="evidence" value="ECO:0007669"/>
    <property type="project" value="InterPro"/>
</dbReference>
<dbReference type="GO" id="GO:0004620">
    <property type="term" value="F:phospholipase activity"/>
    <property type="evidence" value="ECO:0000318"/>
    <property type="project" value="GO_Central"/>
</dbReference>
<dbReference type="GO" id="GO:0016042">
    <property type="term" value="P:lipid catabolic process"/>
    <property type="evidence" value="ECO:0000318"/>
    <property type="project" value="GO_Central"/>
</dbReference>
<dbReference type="CDD" id="cd00707">
    <property type="entry name" value="Pancreat_lipase_like"/>
    <property type="match status" value="1"/>
</dbReference>
<dbReference type="FunFam" id="3.40.50.1820:FF:000063">
    <property type="entry name" value="Lipase member H"/>
    <property type="match status" value="1"/>
</dbReference>
<dbReference type="Gene3D" id="3.40.50.1820">
    <property type="entry name" value="alpha/beta hydrolase"/>
    <property type="match status" value="1"/>
</dbReference>
<dbReference type="InterPro" id="IPR029058">
    <property type="entry name" value="AB_hydrolase_fold"/>
</dbReference>
<dbReference type="InterPro" id="IPR013818">
    <property type="entry name" value="Lipase"/>
</dbReference>
<dbReference type="InterPro" id="IPR016272">
    <property type="entry name" value="Lipase_LIPH"/>
</dbReference>
<dbReference type="InterPro" id="IPR033906">
    <property type="entry name" value="Lipase_N"/>
</dbReference>
<dbReference type="InterPro" id="IPR000734">
    <property type="entry name" value="TAG_lipase"/>
</dbReference>
<dbReference type="PANTHER" id="PTHR11610">
    <property type="entry name" value="LIPASE"/>
    <property type="match status" value="1"/>
</dbReference>
<dbReference type="PANTHER" id="PTHR11610:SF12">
    <property type="entry name" value="LIPASE MEMBER H"/>
    <property type="match status" value="1"/>
</dbReference>
<dbReference type="Pfam" id="PF00151">
    <property type="entry name" value="Lipase"/>
    <property type="match status" value="1"/>
</dbReference>
<dbReference type="PIRSF" id="PIRSF000865">
    <property type="entry name" value="Lipoprotein_lipase_LIPH"/>
    <property type="match status" value="1"/>
</dbReference>
<dbReference type="PRINTS" id="PR00821">
    <property type="entry name" value="TAGLIPASE"/>
</dbReference>
<dbReference type="SUPFAM" id="SSF53474">
    <property type="entry name" value="alpha/beta-Hydrolases"/>
    <property type="match status" value="1"/>
</dbReference>
<name>LIPHA_XENLA</name>
<protein>
    <recommendedName>
        <fullName>Lipase member H-A</fullName>
        <ecNumber>3.1.1.-</ecNumber>
    </recommendedName>
</protein>
<gene>
    <name type="primary">liph-a</name>
</gene>
<sequence length="460" mass="52063">MLLSFYFNGLLLVGCLLSWGRSDTEGQCHTFTDLNIHNAIIGTGLKVQLLLYTRENPNCAQDLNEDNSTGFQYLNVTRKTVFIIHGYRPTGSPPVWIDDIVKKFLDIQDFNVIVVDWNRGATTVLYHNAAANTRKVADILKRLIDNMLSQGATLDSVYMVGVSLGAHISGFVGKMYNGSIGRITGLDPAGPLFNGKPPEERLHYTDAQFVDVVHTDIDGLGYKESLGHIDFYPNGGTDQPGCPKTILAGSEYFKCDHQRSVYLYISSLKKNCDLVGFPCKSYRDYRIGNCTDCKEFLPLSCPVLGFYADKWKDHLVEKNPPGTKAFFDTAAKDPFCKFHYYLDFMTWSSQTKRGYITIKLKSLDGNVTESKLDKDHATFQQYKETSLLAKFDQDLDQISKISVTFTTGSIIGPKYKLRVLRMRLRPLTNRDRPILCRYDFVLLENIEMEFIPIPCEDTNL</sequence>
<proteinExistence type="evidence at transcript level"/>
<feature type="signal peptide" evidence="3">
    <location>
        <begin position="1"/>
        <end position="26"/>
    </location>
</feature>
<feature type="chain" id="PRO_0000273326" description="Lipase member H-A">
    <location>
        <begin position="27"/>
        <end position="460"/>
    </location>
</feature>
<feature type="active site" description="Nucleophile" evidence="1">
    <location>
        <position position="163"/>
    </location>
</feature>
<feature type="active site" description="Charge relay system" evidence="1">
    <location>
        <position position="187"/>
    </location>
</feature>
<feature type="active site" description="Charge relay system" evidence="1">
    <location>
        <position position="257"/>
    </location>
</feature>
<feature type="glycosylation site" description="N-linked (GlcNAc...) asparagine" evidence="3">
    <location>
        <position position="67"/>
    </location>
</feature>
<feature type="glycosylation site" description="N-linked (GlcNAc...) asparagine" evidence="3">
    <location>
        <position position="75"/>
    </location>
</feature>
<feature type="glycosylation site" description="N-linked (GlcNAc...) asparagine" evidence="3">
    <location>
        <position position="177"/>
    </location>
</feature>
<feature type="glycosylation site" description="N-linked (GlcNAc...) asparagine" evidence="3">
    <location>
        <position position="289"/>
    </location>
</feature>
<feature type="glycosylation site" description="N-linked (GlcNAc...) asparagine" evidence="3">
    <location>
        <position position="366"/>
    </location>
</feature>
<feature type="disulfide bond" evidence="1">
    <location>
        <begin position="242"/>
        <end position="255"/>
    </location>
</feature>
<feature type="disulfide bond" evidence="1">
    <location>
        <begin position="279"/>
        <end position="290"/>
    </location>
</feature>
<feature type="disulfide bond" evidence="1">
    <location>
        <begin position="293"/>
        <end position="301"/>
    </location>
</feature>
<feature type="disulfide bond" evidence="1">
    <location>
        <begin position="436"/>
        <end position="455"/>
    </location>
</feature>
<keyword id="KW-1003">Cell membrane</keyword>
<keyword id="KW-1015">Disulfide bond</keyword>
<keyword id="KW-0325">Glycoprotein</keyword>
<keyword id="KW-0378">Hydrolase</keyword>
<keyword id="KW-0442">Lipid degradation</keyword>
<keyword id="KW-0443">Lipid metabolism</keyword>
<keyword id="KW-0472">Membrane</keyword>
<keyword id="KW-1185">Reference proteome</keyword>
<keyword id="KW-0964">Secreted</keyword>
<keyword id="KW-0732">Signal</keyword>
<accession>Q6PA23</accession>
<evidence type="ECO:0000250" key="1"/>
<evidence type="ECO:0000250" key="2">
    <source>
        <dbReference type="UniProtKB" id="Q8WWY8"/>
    </source>
</evidence>
<evidence type="ECO:0000255" key="3"/>
<evidence type="ECO:0000305" key="4"/>
<organism>
    <name type="scientific">Xenopus laevis</name>
    <name type="common">African clawed frog</name>
    <dbReference type="NCBI Taxonomy" id="8355"/>
    <lineage>
        <taxon>Eukaryota</taxon>
        <taxon>Metazoa</taxon>
        <taxon>Chordata</taxon>
        <taxon>Craniata</taxon>
        <taxon>Vertebrata</taxon>
        <taxon>Euteleostomi</taxon>
        <taxon>Amphibia</taxon>
        <taxon>Batrachia</taxon>
        <taxon>Anura</taxon>
        <taxon>Pipoidea</taxon>
        <taxon>Pipidae</taxon>
        <taxon>Xenopodinae</taxon>
        <taxon>Xenopus</taxon>
        <taxon>Xenopus</taxon>
    </lineage>
</organism>
<comment type="function">
    <text evidence="2">Hydrolyzes specifically phosphatidic acid (PA) to produce 2-acyl lysophosphatidic acid (LPA; a potent bioactive lipid mediator) and fatty acid (By similarity). Does not hydrolyze other phospholipids, like phosphatidylserine (PS), phosphatidylcholine (PC) and phosphatidylethanolamine (PE) or triacylglycerol (TG) (By similarity).</text>
</comment>
<comment type="catalytic activity">
    <reaction evidence="2">
        <text>1-hexadecanoyl-2-(9Z-octadecenoyl)-sn-glycero-3-phosphate + H2O = 2-(9Z-octadecenoyl)-sn-glycero-3-phosphate + hexadecanoate + H(+)</text>
        <dbReference type="Rhea" id="RHEA:40943"/>
        <dbReference type="ChEBI" id="CHEBI:7896"/>
        <dbReference type="ChEBI" id="CHEBI:15377"/>
        <dbReference type="ChEBI" id="CHEBI:15378"/>
        <dbReference type="ChEBI" id="CHEBI:64839"/>
        <dbReference type="ChEBI" id="CHEBI:77593"/>
    </reaction>
    <physiologicalReaction direction="left-to-right" evidence="2">
        <dbReference type="Rhea" id="RHEA:40944"/>
    </physiologicalReaction>
</comment>
<comment type="subcellular location">
    <subcellularLocation>
        <location evidence="2">Secreted</location>
    </subcellularLocation>
    <subcellularLocation>
        <location evidence="2">Cell membrane</location>
        <topology>Peripheral membrane protein</topology>
    </subcellularLocation>
</comment>
<comment type="similarity">
    <text evidence="4">Belongs to the AB hydrolase superfamily. Lipase family.</text>
</comment>
<reference key="1">
    <citation type="submission" date="2003-10" db="EMBL/GenBank/DDBJ databases">
        <authorList>
            <consortium name="NIH - Xenopus Gene Collection (XGC) project"/>
        </authorList>
    </citation>
    <scope>NUCLEOTIDE SEQUENCE [LARGE SCALE MRNA]</scope>
    <source>
        <tissue>Lung</tissue>
    </source>
</reference>